<proteinExistence type="inferred from homology"/>
<feature type="chain" id="PRO_0000450534" description="MFS-type transporter ucsM">
    <location>
        <begin position="1"/>
        <end position="599"/>
    </location>
</feature>
<feature type="transmembrane region" description="Helical" evidence="1">
    <location>
        <begin position="147"/>
        <end position="167"/>
    </location>
</feature>
<feature type="transmembrane region" description="Helical" evidence="1">
    <location>
        <begin position="178"/>
        <end position="198"/>
    </location>
</feature>
<feature type="transmembrane region" description="Helical" evidence="1">
    <location>
        <begin position="204"/>
        <end position="224"/>
    </location>
</feature>
<feature type="transmembrane region" description="Helical" evidence="1">
    <location>
        <begin position="263"/>
        <end position="283"/>
    </location>
</feature>
<feature type="transmembrane region" description="Helical" evidence="1">
    <location>
        <begin position="291"/>
        <end position="311"/>
    </location>
</feature>
<feature type="transmembrane region" description="Helical" evidence="1">
    <location>
        <begin position="386"/>
        <end position="406"/>
    </location>
</feature>
<feature type="transmembrane region" description="Helical" evidence="1">
    <location>
        <begin position="424"/>
        <end position="444"/>
    </location>
</feature>
<feature type="transmembrane region" description="Helical" evidence="1">
    <location>
        <begin position="454"/>
        <end position="474"/>
    </location>
</feature>
<feature type="transmembrane region" description="Helical" evidence="1">
    <location>
        <begin position="539"/>
        <end position="559"/>
    </location>
</feature>
<feature type="transmembrane region" description="Helical" evidence="1">
    <location>
        <begin position="563"/>
        <end position="583"/>
    </location>
</feature>
<feature type="region of interest" description="Disordered" evidence="3">
    <location>
        <begin position="23"/>
        <end position="42"/>
    </location>
</feature>
<feature type="compositionally biased region" description="Basic and acidic residues" evidence="3">
    <location>
        <begin position="23"/>
        <end position="34"/>
    </location>
</feature>
<feature type="glycosylation site" description="N-linked (GlcNAc...) asparagine" evidence="2">
    <location>
        <position position="517"/>
    </location>
</feature>
<name>UCSM_ACRSP</name>
<keyword id="KW-0325">Glycoprotein</keyword>
<keyword id="KW-0472">Membrane</keyword>
<keyword id="KW-0812">Transmembrane</keyword>
<keyword id="KW-1133">Transmembrane helix</keyword>
<keyword id="KW-0813">Transport</keyword>
<organism>
    <name type="scientific">Acremonium sp</name>
    <dbReference type="NCBI Taxonomy" id="2046025"/>
    <lineage>
        <taxon>Eukaryota</taxon>
        <taxon>Fungi</taxon>
        <taxon>Dikarya</taxon>
        <taxon>Ascomycota</taxon>
        <taxon>Pezizomycotina</taxon>
        <taxon>Sordariomycetes</taxon>
        <taxon>Hypocreomycetidae</taxon>
        <taxon>Hypocreales</taxon>
        <taxon>Hypocreales incertae sedis</taxon>
        <taxon>Acremonium</taxon>
    </lineage>
</organism>
<comment type="function">
    <text evidence="4">MFS-type transporter; part of the gene cluster that mediates the biosynthesis of UCS1025A, a member of the pyrrolizidinone family that acts as a strong telomerase inhibitor and displays potent antibacterial and antitumor properties (PubMed:29373009). These compounds share a hemiaminal-containing pyrrolizidinone core fused with a gamma-lactone, giving a furopyrrolizidine that is connected to a decalin fragment (PubMed:29373009).</text>
</comment>
<comment type="subcellular location">
    <subcellularLocation>
        <location evidence="1">Membrane</location>
        <topology evidence="1">Multi-pass membrane protein</topology>
    </subcellularLocation>
</comment>
<comment type="similarity">
    <text evidence="6">Belongs to the major facilitator superfamily. Proton-dependent oligopeptide transporter (POT/PTR) (TC 2.A.17) family.</text>
</comment>
<dbReference type="EMBL" id="MH375776">
    <property type="protein sequence ID" value="QBC88157.1"/>
    <property type="molecule type" value="Genomic_DNA"/>
</dbReference>
<dbReference type="SMR" id="A0A411KUQ2"/>
<dbReference type="GlyCosmos" id="A0A411KUQ2">
    <property type="glycosylation" value="1 site, No reported glycans"/>
</dbReference>
<dbReference type="GO" id="GO:0016020">
    <property type="term" value="C:membrane"/>
    <property type="evidence" value="ECO:0007669"/>
    <property type="project" value="UniProtKB-SubCell"/>
</dbReference>
<dbReference type="GO" id="GO:0022857">
    <property type="term" value="F:transmembrane transporter activity"/>
    <property type="evidence" value="ECO:0007669"/>
    <property type="project" value="InterPro"/>
</dbReference>
<dbReference type="FunFam" id="1.20.1250.20:FF:000085">
    <property type="entry name" value="MFS peptide transporter Ptr2"/>
    <property type="match status" value="1"/>
</dbReference>
<dbReference type="Gene3D" id="1.20.1250.20">
    <property type="entry name" value="MFS general substrate transporter like domains"/>
    <property type="match status" value="1"/>
</dbReference>
<dbReference type="InterPro" id="IPR036259">
    <property type="entry name" value="MFS_trans_sf"/>
</dbReference>
<dbReference type="InterPro" id="IPR000109">
    <property type="entry name" value="POT_fam"/>
</dbReference>
<dbReference type="PANTHER" id="PTHR11654">
    <property type="entry name" value="OLIGOPEPTIDE TRANSPORTER-RELATED"/>
    <property type="match status" value="1"/>
</dbReference>
<dbReference type="Pfam" id="PF00854">
    <property type="entry name" value="PTR2"/>
    <property type="match status" value="1"/>
</dbReference>
<dbReference type="SUPFAM" id="SSF103473">
    <property type="entry name" value="MFS general substrate transporter"/>
    <property type="match status" value="1"/>
</dbReference>
<gene>
    <name evidence="5" type="primary">ucsM</name>
</gene>
<evidence type="ECO:0000255" key="1"/>
<evidence type="ECO:0000255" key="2">
    <source>
        <dbReference type="PROSITE-ProRule" id="PRU00498"/>
    </source>
</evidence>
<evidence type="ECO:0000256" key="3">
    <source>
        <dbReference type="SAM" id="MobiDB-lite"/>
    </source>
</evidence>
<evidence type="ECO:0000269" key="4">
    <source>
    </source>
</evidence>
<evidence type="ECO:0000303" key="5">
    <source>
    </source>
</evidence>
<evidence type="ECO:0000305" key="6"/>
<accession>A0A411KUQ2</accession>
<reference key="1">
    <citation type="journal article" date="2018" name="J. Am. Chem. Soc.">
        <title>Genome mining and assembly-line biosynthesis of the UCS1025A pyrrolizidinone family of fungal alkaloids.</title>
        <authorList>
            <person name="Li L."/>
            <person name="Tang M.C."/>
            <person name="Tang S."/>
            <person name="Gao S."/>
            <person name="Soliman S."/>
            <person name="Hang L."/>
            <person name="Xu W."/>
            <person name="Ye T."/>
            <person name="Watanabe K."/>
            <person name="Tang Y."/>
        </authorList>
    </citation>
    <scope>NUCLEOTIDE SEQUENCE [GENOMIC DNA]</scope>
    <scope>FUNCTION</scope>
    <source>
        <strain>KY4917</strain>
    </source>
</reference>
<protein>
    <recommendedName>
        <fullName evidence="5">MFS-type transporter ucsM</fullName>
    </recommendedName>
    <alternativeName>
        <fullName evidence="5">UCS1025A pyrrolizidinone biosynthesis cluster protein M</fullName>
    </alternativeName>
</protein>
<sequence length="599" mass="65669">MKHADPLRADTLGTAPLSQAIEAHHHGKEREAHRQSLSSVPGDTVVEAPEKVVDLEINSVDNDKEHHRAPTRDEIQTLRKVPGSIPATAYLLCFVDFAERASWFGARSVSSNFMQFPLPEGGNGAGAPPSGSELPAGALGHGQRFSVALGLVFSFLSYVIPIFGAWLAEAKVGRYRTILIGVLIGGVAHIIMIAGAVPSILQAGKGTAPFLVSLFLLALGAGLFRPNVSPTVLDQHRHYQPFVKELPSGENVIIDPEATMQRIMLIFYALINVGAFYSLATVYSEKLVGYWLAFLLPGIIYLLLPLMLWYLNDKLIKVPPDGGALTKFWKILTVSLVENKGMVWKKGFFDRVQPGALLQKYPSSGPVKWTSKDVEDVKRTLVACEIFLYFPIYHLNDGGVGTILPSQGAAMLKKGVPNDLLGNFNPITIMITVPVLTYIVYPALRKSNIKFGRISRITLGFWLAVISGLVSSLVQWRIYKTSPCGYHATTCPEVAPVSIWWQLPSYVLGALSECFSNVTGYELAYARSPPGMRSLVVSLFLFSTALSSALGLILTPAIVDPHLVWVWAGPTIALAVQTVIFWVRHRKYNDDEFMIEGDE</sequence>